<protein>
    <recommendedName>
        <fullName>Probable anguibactin biosynthesis thioesterase AngT</fullName>
        <ecNumber>3.1.2.-</ecNumber>
    </recommendedName>
</protein>
<proteinExistence type="inferred from homology"/>
<feature type="chain" id="PRO_0000180361" description="Probable anguibactin biosynthesis thioesterase AngT">
    <location>
        <begin position="1"/>
        <end position="252"/>
    </location>
</feature>
<feature type="active site" evidence="1">
    <location>
        <position position="92"/>
    </location>
</feature>
<feature type="active site" evidence="1">
    <location>
        <position position="229"/>
    </location>
</feature>
<evidence type="ECO:0000250" key="1"/>
<evidence type="ECO:0000305" key="2"/>
<accession>P0DJG9</accession>
<accession>P19829</accession>
<dbReference type="EC" id="3.1.2.-"/>
<dbReference type="EMBL" id="Z12000">
    <property type="protein sequence ID" value="CAA78045.1"/>
    <property type="molecule type" value="Genomic_DNA"/>
</dbReference>
<dbReference type="PIR" id="JQ0417">
    <property type="entry name" value="JQ0417"/>
</dbReference>
<dbReference type="RefSeq" id="WP_011154640.1">
    <property type="nucleotide sequence ID" value="NZ_VSLF01000048.1"/>
</dbReference>
<dbReference type="SMR" id="P0DJG9"/>
<dbReference type="ESTHER" id="viban-sast">
    <property type="family name" value="Thioesterase"/>
</dbReference>
<dbReference type="OMA" id="PGHGTNQ"/>
<dbReference type="UniPathway" id="UPA00016"/>
<dbReference type="GO" id="GO:0016787">
    <property type="term" value="F:hydrolase activity"/>
    <property type="evidence" value="ECO:0007669"/>
    <property type="project" value="UniProtKB-KW"/>
</dbReference>
<dbReference type="GO" id="GO:0008610">
    <property type="term" value="P:lipid biosynthetic process"/>
    <property type="evidence" value="ECO:0007669"/>
    <property type="project" value="TreeGrafter"/>
</dbReference>
<dbReference type="Gene3D" id="3.40.50.1820">
    <property type="entry name" value="alpha/beta hydrolase"/>
    <property type="match status" value="1"/>
</dbReference>
<dbReference type="InterPro" id="IPR029058">
    <property type="entry name" value="AB_hydrolase_fold"/>
</dbReference>
<dbReference type="InterPro" id="IPR012223">
    <property type="entry name" value="TEII"/>
</dbReference>
<dbReference type="InterPro" id="IPR001031">
    <property type="entry name" value="Thioesterase"/>
</dbReference>
<dbReference type="PANTHER" id="PTHR11487:SF0">
    <property type="entry name" value="S-ACYL FATTY ACID SYNTHASE THIOESTERASE, MEDIUM CHAIN"/>
    <property type="match status" value="1"/>
</dbReference>
<dbReference type="PANTHER" id="PTHR11487">
    <property type="entry name" value="THIOESTERASE"/>
    <property type="match status" value="1"/>
</dbReference>
<dbReference type="Pfam" id="PF00975">
    <property type="entry name" value="Thioesterase"/>
    <property type="match status" value="1"/>
</dbReference>
<dbReference type="SUPFAM" id="SSF53474">
    <property type="entry name" value="alpha/beta-Hydrolases"/>
    <property type="match status" value="1"/>
</dbReference>
<geneLocation type="plasmid">
    <name>pJHC1</name>
</geneLocation>
<keyword id="KW-0378">Hydrolase</keyword>
<keyword id="KW-0614">Plasmid</keyword>
<keyword id="KW-0843">Virulence</keyword>
<name>ANGT_VIBAN</name>
<comment type="function">
    <text evidence="1">Probable thioesterase. Involved in anguibactin production, but is not essential for virulence or iron transport gene expression (By similarity).</text>
</comment>
<comment type="pathway">
    <text>Siderophore biosynthesis; anguibactin biosynthesis.</text>
</comment>
<comment type="similarity">
    <text evidence="2">Belongs to the thioesterase family.</text>
</comment>
<gene>
    <name type="primary">angT</name>
</gene>
<sequence>MSPLIKLAASSRLHDATHYVLCPFAGGGSGAFRHWRTLSLENEVISVMLYPGREFRIDDPTVINIGTLAEEMIQALKTCNQRIEDTIIVGHSMGAQVAYEASKKLVNQGLFLKGLIISGCQAPHIKGRRLLGECDDKTFIHNLVEIGGCDPSLAKSPEWWPIFLPALRADFTATEQYIFTSLPNDKEGLPIPTLLISGDQDREANFSEIEEWKLWCNKVVDHLVVEGGHFYITEQPQMMLECIRALSTETTA</sequence>
<organism>
    <name type="scientific">Vibrio anguillarum</name>
    <name type="common">Listonella anguillarum</name>
    <dbReference type="NCBI Taxonomy" id="55601"/>
    <lineage>
        <taxon>Bacteria</taxon>
        <taxon>Pseudomonadati</taxon>
        <taxon>Pseudomonadota</taxon>
        <taxon>Gammaproteobacteria</taxon>
        <taxon>Vibrionales</taxon>
        <taxon>Vibrionaceae</taxon>
        <taxon>Vibrio</taxon>
    </lineage>
</organism>
<reference key="1">
    <citation type="journal article" date="1993" name="Infect. Immun.">
        <title>A single amino acid change in AngR, a protein encoded by pJM1-like virulence plasmids, results in hyperproduction of anguibactin.</title>
        <authorList>
            <person name="Tolmasky M.E."/>
            <person name="Actis L.A."/>
            <person name="Crosa J.H."/>
        </authorList>
    </citation>
    <scope>NUCLEOTIDE SEQUENCE [GENOMIC DNA]</scope>
    <source>
        <strain>531A</strain>
    </source>
</reference>